<evidence type="ECO:0000250" key="1"/>
<evidence type="ECO:0000255" key="2">
    <source>
        <dbReference type="PROSITE-ProRule" id="PRU00108"/>
    </source>
</evidence>
<evidence type="ECO:0000305" key="3"/>
<feature type="chain" id="PRO_0000049180" description="Mating-type protein ALPHA2">
    <location>
        <begin position="1"/>
        <end position="223"/>
    </location>
</feature>
<feature type="DNA-binding region" description="Homeobox; TALE-type" evidence="2">
    <location>
        <begin position="151"/>
        <end position="213"/>
    </location>
</feature>
<feature type="sequence conflict" description="In Ref. 2; CAH01061." evidence="3" ref="2">
    <original>L</original>
    <variation>P</variation>
    <location>
        <position position="159"/>
    </location>
</feature>
<comment type="function">
    <text evidence="1">Mating type proteins are sequence specific DNA-binding proteins that act as master switches in yeast differentiation by controlling gene expression in a cell type-specific fashion. Transcriptional corepressor that acts in conjunction with A1 to repress transcription of haploid-specific genes (By similarity).</text>
</comment>
<comment type="subunit">
    <text evidence="1">Forms a heterodimer with A1.</text>
</comment>
<comment type="subcellular location">
    <subcellularLocation>
        <location evidence="2">Nucleus</location>
    </subcellularLocation>
</comment>
<comment type="miscellaneous">
    <text>There are three genetic loci for mating type genes in K.lactis. MAT is the expression locus that determines the mating type of the cell, whereas HML (containing HMLALPHA1, HMLALPHA2 and HMLALPHA3) and HMR (containing HMRA1 and HMRA2) represent silenced repositories of mating type information. The mating type is determined by the MAT locus, which contains either a copy of HML or of HMR. Diploid cells are usually heterozygous for the MAT locus.</text>
</comment>
<comment type="similarity">
    <text evidence="3">Belongs to the TALE/M-ATYP homeobox family.</text>
</comment>
<reference key="1">
    <citation type="journal article" date="2000" name="Genetics">
        <title>Kluyveromyces lactis Sir2p regulates cation sensitivity and maintains a specialized chromatin structure at the cryptic alpha-locus.</title>
        <authorList>
            <person name="Aastroem S.U."/>
            <person name="Kegel A."/>
            <person name="Sjoestrand J.O.O."/>
            <person name="Rine J."/>
        </authorList>
    </citation>
    <scope>NUCLEOTIDE SEQUENCE [GENOMIC DNA]</scope>
</reference>
<reference key="2">
    <citation type="journal article" date="2004" name="Nature">
        <title>Genome evolution in yeasts.</title>
        <authorList>
            <person name="Dujon B."/>
            <person name="Sherman D."/>
            <person name="Fischer G."/>
            <person name="Durrens P."/>
            <person name="Casaregola S."/>
            <person name="Lafontaine I."/>
            <person name="de Montigny J."/>
            <person name="Marck C."/>
            <person name="Neuveglise C."/>
            <person name="Talla E."/>
            <person name="Goffard N."/>
            <person name="Frangeul L."/>
            <person name="Aigle M."/>
            <person name="Anthouard V."/>
            <person name="Babour A."/>
            <person name="Barbe V."/>
            <person name="Barnay S."/>
            <person name="Blanchin S."/>
            <person name="Beckerich J.-M."/>
            <person name="Beyne E."/>
            <person name="Bleykasten C."/>
            <person name="Boisrame A."/>
            <person name="Boyer J."/>
            <person name="Cattolico L."/>
            <person name="Confanioleri F."/>
            <person name="de Daruvar A."/>
            <person name="Despons L."/>
            <person name="Fabre E."/>
            <person name="Fairhead C."/>
            <person name="Ferry-Dumazet H."/>
            <person name="Groppi A."/>
            <person name="Hantraye F."/>
            <person name="Hennequin C."/>
            <person name="Jauniaux N."/>
            <person name="Joyet P."/>
            <person name="Kachouri R."/>
            <person name="Kerrest A."/>
            <person name="Koszul R."/>
            <person name="Lemaire M."/>
            <person name="Lesur I."/>
            <person name="Ma L."/>
            <person name="Muller H."/>
            <person name="Nicaud J.-M."/>
            <person name="Nikolski M."/>
            <person name="Oztas S."/>
            <person name="Ozier-Kalogeropoulos O."/>
            <person name="Pellenz S."/>
            <person name="Potier S."/>
            <person name="Richard G.-F."/>
            <person name="Straub M.-L."/>
            <person name="Suleau A."/>
            <person name="Swennen D."/>
            <person name="Tekaia F."/>
            <person name="Wesolowski-Louvel M."/>
            <person name="Westhof E."/>
            <person name="Wirth B."/>
            <person name="Zeniou-Meyer M."/>
            <person name="Zivanovic Y."/>
            <person name="Bolotin-Fukuhara M."/>
            <person name="Thierry A."/>
            <person name="Bouchier C."/>
            <person name="Caudron B."/>
            <person name="Scarpelli C."/>
            <person name="Gaillardin C."/>
            <person name="Weissenbach J."/>
            <person name="Wincker P."/>
            <person name="Souciet J.-L."/>
        </authorList>
    </citation>
    <scope>NUCLEOTIDE SEQUENCE [LARGE SCALE GENOMIC DNA]</scope>
    <source>
        <strain>ATCC 8585 / CBS 2359 / DSM 70799 / NBRC 1267 / NRRL Y-1140 / WM37</strain>
    </source>
</reference>
<organism>
    <name type="scientific">Kluyveromyces lactis (strain ATCC 8585 / CBS 2359 / DSM 70799 / NBRC 1267 / NRRL Y-1140 / WM37)</name>
    <name type="common">Yeast</name>
    <name type="synonym">Candida sphaerica</name>
    <dbReference type="NCBI Taxonomy" id="284590"/>
    <lineage>
        <taxon>Eukaryota</taxon>
        <taxon>Fungi</taxon>
        <taxon>Dikarya</taxon>
        <taxon>Ascomycota</taxon>
        <taxon>Saccharomycotina</taxon>
        <taxon>Saccharomycetes</taxon>
        <taxon>Saccharomycetales</taxon>
        <taxon>Saccharomycetaceae</taxon>
        <taxon>Kluyveromyces</taxon>
    </lineage>
</organism>
<proteinExistence type="inferred from homology"/>
<name>MTAL2_KLULA</name>
<gene>
    <name type="primary">HMLALPHA2</name>
    <name type="synonym">alpha2</name>
    <name type="ordered locus">KLLA0C00374g</name>
</gene>
<sequence>MSRIPIHSLLNPSESCKSISNVPSNYRDLSTFNKERAKVITTFQEMFYSMLENNDDYNKIESLIRNFQPKLTWSHKCESLTFKQKAYLTAIIQKSIKSLLVLLKEKGKMREIEFSRKEVRKINKYRQSSKNFESVNIKILTQDLMHSNNNEFKKGKRFLKSHIQLLENWYSMNRRNPYLAENDLAYISKNTTLTKTQIKNWLANRRRKDKITEVSSDIRNILN</sequence>
<dbReference type="EMBL" id="AF195066">
    <property type="protein sequence ID" value="AAG21091.1"/>
    <property type="molecule type" value="Genomic_DNA"/>
</dbReference>
<dbReference type="EMBL" id="CR382123">
    <property type="protein sequence ID" value="CAH01061.1"/>
    <property type="molecule type" value="Genomic_DNA"/>
</dbReference>
<dbReference type="RefSeq" id="XP_452211.1">
    <property type="nucleotide sequence ID" value="XM_452211.1"/>
</dbReference>
<dbReference type="SMR" id="Q9HDS5"/>
<dbReference type="FunCoup" id="Q9HDS5">
    <property type="interactions" value="205"/>
</dbReference>
<dbReference type="STRING" id="284590.Q9HDS5"/>
<dbReference type="PaxDb" id="284590-Q9HDS5"/>
<dbReference type="KEGG" id="kla:KLLA0_C00374g"/>
<dbReference type="eggNOG" id="KOG0773">
    <property type="taxonomic scope" value="Eukaryota"/>
</dbReference>
<dbReference type="HOGENOM" id="CLU_091806_1_0_1"/>
<dbReference type="InParanoid" id="Q9HDS5"/>
<dbReference type="Proteomes" id="UP000000598">
    <property type="component" value="Chromosome C"/>
</dbReference>
<dbReference type="GO" id="GO:0005634">
    <property type="term" value="C:nucleus"/>
    <property type="evidence" value="ECO:0007669"/>
    <property type="project" value="UniProtKB-SubCell"/>
</dbReference>
<dbReference type="GO" id="GO:0003677">
    <property type="term" value="F:DNA binding"/>
    <property type="evidence" value="ECO:0007669"/>
    <property type="project" value="UniProtKB-KW"/>
</dbReference>
<dbReference type="GO" id="GO:0006355">
    <property type="term" value="P:regulation of DNA-templated transcription"/>
    <property type="evidence" value="ECO:0007669"/>
    <property type="project" value="InterPro"/>
</dbReference>
<dbReference type="CDD" id="cd00086">
    <property type="entry name" value="homeodomain"/>
    <property type="match status" value="1"/>
</dbReference>
<dbReference type="Gene3D" id="1.10.10.60">
    <property type="entry name" value="Homeodomain-like"/>
    <property type="match status" value="1"/>
</dbReference>
<dbReference type="InterPro" id="IPR001356">
    <property type="entry name" value="HD"/>
</dbReference>
<dbReference type="InterPro" id="IPR009057">
    <property type="entry name" value="Homeodomain-like_sf"/>
</dbReference>
<dbReference type="InterPro" id="IPR008422">
    <property type="entry name" value="KN_HD"/>
</dbReference>
<dbReference type="Pfam" id="PF05920">
    <property type="entry name" value="Homeobox_KN"/>
    <property type="match status" value="1"/>
</dbReference>
<dbReference type="SMART" id="SM00389">
    <property type="entry name" value="HOX"/>
    <property type="match status" value="1"/>
</dbReference>
<dbReference type="SUPFAM" id="SSF46689">
    <property type="entry name" value="Homeodomain-like"/>
    <property type="match status" value="1"/>
</dbReference>
<dbReference type="PROSITE" id="PS50071">
    <property type="entry name" value="HOMEOBOX_2"/>
    <property type="match status" value="1"/>
</dbReference>
<keyword id="KW-0238">DNA-binding</keyword>
<keyword id="KW-0371">Homeobox</keyword>
<keyword id="KW-0539">Nucleus</keyword>
<keyword id="KW-1185">Reference proteome</keyword>
<keyword id="KW-0678">Repressor</keyword>
<keyword id="KW-0804">Transcription</keyword>
<keyword id="KW-0805">Transcription regulation</keyword>
<protein>
    <recommendedName>
        <fullName>Mating-type protein ALPHA2</fullName>
        <shortName>MATalpha2 protein</shortName>
    </recommendedName>
</protein>
<accession>Q9HDS5</accession>
<accession>Q6CV28</accession>